<protein>
    <recommendedName>
        <fullName evidence="1">Membrane protein insertase YidC</fullName>
    </recommendedName>
    <alternativeName>
        <fullName evidence="1">Foldase YidC</fullName>
    </alternativeName>
    <alternativeName>
        <fullName evidence="1">Membrane integrase YidC</fullName>
    </alternativeName>
    <alternativeName>
        <fullName evidence="1">Membrane protein YidC</fullName>
    </alternativeName>
</protein>
<feature type="chain" id="PRO_1000187666" description="Membrane protein insertase YidC">
    <location>
        <begin position="1"/>
        <end position="548"/>
    </location>
</feature>
<feature type="transmembrane region" description="Helical" evidence="1">
    <location>
        <begin position="6"/>
        <end position="26"/>
    </location>
</feature>
<feature type="transmembrane region" description="Helical" evidence="1">
    <location>
        <begin position="345"/>
        <end position="365"/>
    </location>
</feature>
<feature type="transmembrane region" description="Helical" evidence="1">
    <location>
        <begin position="420"/>
        <end position="440"/>
    </location>
</feature>
<feature type="transmembrane region" description="Helical" evidence="1">
    <location>
        <begin position="458"/>
        <end position="478"/>
    </location>
</feature>
<feature type="transmembrane region" description="Helical" evidence="1">
    <location>
        <begin position="499"/>
        <end position="519"/>
    </location>
</feature>
<feature type="region of interest" description="Disordered" evidence="2">
    <location>
        <begin position="30"/>
        <end position="53"/>
    </location>
</feature>
<proteinExistence type="inferred from homology"/>
<reference key="1">
    <citation type="journal article" date="2008" name="Environ. Microbiol.">
        <title>The genome of Erwinia tasmaniensis strain Et1/99, a non-pathogenic bacterium in the genus Erwinia.</title>
        <authorList>
            <person name="Kube M."/>
            <person name="Migdoll A.M."/>
            <person name="Mueller I."/>
            <person name="Kuhl H."/>
            <person name="Beck A."/>
            <person name="Reinhardt R."/>
            <person name="Geider K."/>
        </authorList>
    </citation>
    <scope>NUCLEOTIDE SEQUENCE [LARGE SCALE GENOMIC DNA]</scope>
    <source>
        <strain>DSM 17950 / CFBP 7177 / CIP 109463 / NCPPB 4357 / Et1/99</strain>
    </source>
</reference>
<accession>B2VCE6</accession>
<organism>
    <name type="scientific">Erwinia tasmaniensis (strain DSM 17950 / CFBP 7177 / CIP 109463 / NCPPB 4357 / Et1/99)</name>
    <dbReference type="NCBI Taxonomy" id="465817"/>
    <lineage>
        <taxon>Bacteria</taxon>
        <taxon>Pseudomonadati</taxon>
        <taxon>Pseudomonadota</taxon>
        <taxon>Gammaproteobacteria</taxon>
        <taxon>Enterobacterales</taxon>
        <taxon>Erwiniaceae</taxon>
        <taxon>Erwinia</taxon>
    </lineage>
</organism>
<evidence type="ECO:0000255" key="1">
    <source>
        <dbReference type="HAMAP-Rule" id="MF_01810"/>
    </source>
</evidence>
<evidence type="ECO:0000256" key="2">
    <source>
        <dbReference type="SAM" id="MobiDB-lite"/>
    </source>
</evidence>
<keyword id="KW-0997">Cell inner membrane</keyword>
<keyword id="KW-1003">Cell membrane</keyword>
<keyword id="KW-0143">Chaperone</keyword>
<keyword id="KW-0472">Membrane</keyword>
<keyword id="KW-0653">Protein transport</keyword>
<keyword id="KW-1185">Reference proteome</keyword>
<keyword id="KW-0812">Transmembrane</keyword>
<keyword id="KW-1133">Transmembrane helix</keyword>
<keyword id="KW-0813">Transport</keyword>
<gene>
    <name evidence="1" type="primary">yidC</name>
    <name type="ordered locus">ETA_34560</name>
</gene>
<comment type="function">
    <text evidence="1">Required for the insertion and/or proper folding and/or complex formation of integral membrane proteins into the membrane. Involved in integration of membrane proteins that insert both dependently and independently of the Sec translocase complex, as well as at least some lipoproteins. Aids folding of multispanning membrane proteins.</text>
</comment>
<comment type="subunit">
    <text evidence="1">Interacts with the Sec translocase complex via SecD. Specifically interacts with transmembrane segments of nascent integral membrane proteins during membrane integration.</text>
</comment>
<comment type="subcellular location">
    <subcellularLocation>
        <location evidence="1">Cell inner membrane</location>
        <topology evidence="1">Multi-pass membrane protein</topology>
    </subcellularLocation>
</comment>
<comment type="similarity">
    <text evidence="1">Belongs to the OXA1/ALB3/YidC family. Type 1 subfamily.</text>
</comment>
<name>YIDC_ERWT9</name>
<sequence length="548" mass="61325">MDSQRNLFLIAFLFVSFMIWQAWQTDNAPQPLQTQTTQNTTSAAGDAVNQGVPASGQGKTITVKTDVLSLNINTRGGDIDQAQLLTYPDKLGSDQPFLLLESTPGFLYQAQSGLTGRNGPDNPANGARPLYTSGQDHFELANGQGELRIPLTFTAENGVTYTKTFVLKRGEYAIGVDYQINNTTQQPLEVSMFGQLKQTIDLPKHRDTGSSNFALHTFRGAAYSSSETNYEKYKFDTIRDNENLSTTTNNGWVAMLQQYFATAWVPQTAGSNTLYTSNLGNGVAAIGYKSAPVIVAAGSQQQLAATLWVGPEIQDKMAAVAPHLDLTVDYGWLWFISQPLFKLLKFLHGFIGNWGFSIIVITFIVRGIMYPLTKAQYTSMAKMRMLQPKIQAMRERLGDDKQRMSQEMMALYKAEKVNPLGGCLPLVIQMPIFLALYYMLMGSVELRHAPFALWIHDLAAQDPYYILPILMGVTMFFIQKMSPTTVTDPMQQKIMTFMPVIFTVFFLWFPSGLVLYYIVSNLVTILQQQLIYRGLEKRGLHSRDKKKA</sequence>
<dbReference type="EMBL" id="CU468135">
    <property type="protein sequence ID" value="CAO98502.1"/>
    <property type="molecule type" value="Genomic_DNA"/>
</dbReference>
<dbReference type="RefSeq" id="WP_012443123.1">
    <property type="nucleotide sequence ID" value="NC_010694.1"/>
</dbReference>
<dbReference type="SMR" id="B2VCE6"/>
<dbReference type="STRING" id="465817.ETA_34560"/>
<dbReference type="KEGG" id="eta:ETA_34560"/>
<dbReference type="eggNOG" id="COG0706">
    <property type="taxonomic scope" value="Bacteria"/>
</dbReference>
<dbReference type="HOGENOM" id="CLU_016535_3_0_6"/>
<dbReference type="OrthoDB" id="9780552at2"/>
<dbReference type="Proteomes" id="UP000001726">
    <property type="component" value="Chromosome"/>
</dbReference>
<dbReference type="GO" id="GO:0005886">
    <property type="term" value="C:plasma membrane"/>
    <property type="evidence" value="ECO:0007669"/>
    <property type="project" value="UniProtKB-SubCell"/>
</dbReference>
<dbReference type="GO" id="GO:0032977">
    <property type="term" value="F:membrane insertase activity"/>
    <property type="evidence" value="ECO:0007669"/>
    <property type="project" value="InterPro"/>
</dbReference>
<dbReference type="GO" id="GO:0051205">
    <property type="term" value="P:protein insertion into membrane"/>
    <property type="evidence" value="ECO:0007669"/>
    <property type="project" value="TreeGrafter"/>
</dbReference>
<dbReference type="GO" id="GO:0015031">
    <property type="term" value="P:protein transport"/>
    <property type="evidence" value="ECO:0007669"/>
    <property type="project" value="UniProtKB-KW"/>
</dbReference>
<dbReference type="CDD" id="cd20070">
    <property type="entry name" value="5TM_YidC_Alb3"/>
    <property type="match status" value="1"/>
</dbReference>
<dbReference type="CDD" id="cd19961">
    <property type="entry name" value="EcYidC-like_peri"/>
    <property type="match status" value="1"/>
</dbReference>
<dbReference type="FunFam" id="2.70.98.90:FF:000001">
    <property type="entry name" value="Membrane protein insertase YidC"/>
    <property type="match status" value="1"/>
</dbReference>
<dbReference type="Gene3D" id="2.70.98.90">
    <property type="match status" value="1"/>
</dbReference>
<dbReference type="HAMAP" id="MF_01810">
    <property type="entry name" value="YidC_type1"/>
    <property type="match status" value="1"/>
</dbReference>
<dbReference type="InterPro" id="IPR019998">
    <property type="entry name" value="Membr_insert_YidC"/>
</dbReference>
<dbReference type="InterPro" id="IPR028053">
    <property type="entry name" value="Membr_insert_YidC_N"/>
</dbReference>
<dbReference type="InterPro" id="IPR001708">
    <property type="entry name" value="YidC/ALB3/OXA1/COX18"/>
</dbReference>
<dbReference type="InterPro" id="IPR028055">
    <property type="entry name" value="YidC/Oxa/ALB_C"/>
</dbReference>
<dbReference type="InterPro" id="IPR047196">
    <property type="entry name" value="YidC_ALB_C"/>
</dbReference>
<dbReference type="InterPro" id="IPR038221">
    <property type="entry name" value="YidC_periplasmic_sf"/>
</dbReference>
<dbReference type="NCBIfam" id="NF002351">
    <property type="entry name" value="PRK01318.1-1"/>
    <property type="match status" value="1"/>
</dbReference>
<dbReference type="NCBIfam" id="NF002352">
    <property type="entry name" value="PRK01318.1-3"/>
    <property type="match status" value="1"/>
</dbReference>
<dbReference type="NCBIfam" id="TIGR03593">
    <property type="entry name" value="yidC_nterm"/>
    <property type="match status" value="1"/>
</dbReference>
<dbReference type="NCBIfam" id="TIGR03592">
    <property type="entry name" value="yidC_oxa1_cterm"/>
    <property type="match status" value="1"/>
</dbReference>
<dbReference type="PANTHER" id="PTHR12428:SF65">
    <property type="entry name" value="CYTOCHROME C OXIDASE ASSEMBLY PROTEIN COX18, MITOCHONDRIAL"/>
    <property type="match status" value="1"/>
</dbReference>
<dbReference type="PANTHER" id="PTHR12428">
    <property type="entry name" value="OXA1"/>
    <property type="match status" value="1"/>
</dbReference>
<dbReference type="Pfam" id="PF02096">
    <property type="entry name" value="60KD_IMP"/>
    <property type="match status" value="1"/>
</dbReference>
<dbReference type="Pfam" id="PF14849">
    <property type="entry name" value="YidC_periplas"/>
    <property type="match status" value="1"/>
</dbReference>
<dbReference type="PRINTS" id="PR00701">
    <property type="entry name" value="60KDINNERMP"/>
</dbReference>
<dbReference type="PRINTS" id="PR01900">
    <property type="entry name" value="YIDCPROTEIN"/>
</dbReference>